<dbReference type="EMBL" id="AAFI02000089">
    <property type="protein sequence ID" value="EAL64118.1"/>
    <property type="molecule type" value="Genomic_DNA"/>
</dbReference>
<dbReference type="RefSeq" id="XP_637643.1">
    <property type="nucleotide sequence ID" value="XM_632551.1"/>
</dbReference>
<dbReference type="SMR" id="Q54LB8"/>
<dbReference type="FunCoup" id="Q54LB8">
    <property type="interactions" value="372"/>
</dbReference>
<dbReference type="STRING" id="44689.Q54LB8"/>
<dbReference type="TCDB" id="1.R.2.1.3">
    <property type="family name" value="the bridge-like lipid transfer protein (bltp) family"/>
</dbReference>
<dbReference type="PaxDb" id="44689-DDB0234198"/>
<dbReference type="EnsemblProtists" id="EAL64118">
    <property type="protein sequence ID" value="EAL64118"/>
    <property type="gene ID" value="DDB_G0286725"/>
</dbReference>
<dbReference type="GeneID" id="8625784"/>
<dbReference type="KEGG" id="ddi:DDB_G0286725"/>
<dbReference type="dictyBase" id="DDB_G0286725">
    <property type="gene designation" value="vps13A"/>
</dbReference>
<dbReference type="VEuPathDB" id="AmoebaDB:DDB_G0286725"/>
<dbReference type="eggNOG" id="KOG1796">
    <property type="taxonomic scope" value="Eukaryota"/>
</dbReference>
<dbReference type="eggNOG" id="KOG1809">
    <property type="taxonomic scope" value="Eukaryota"/>
</dbReference>
<dbReference type="HOGENOM" id="CLU_000135_1_0_1"/>
<dbReference type="InParanoid" id="Q54LB8"/>
<dbReference type="OMA" id="SGWRPIR"/>
<dbReference type="PhylomeDB" id="Q54LB8"/>
<dbReference type="PRO" id="PR:Q54LB8"/>
<dbReference type="Proteomes" id="UP000002195">
    <property type="component" value="Chromosome 4"/>
</dbReference>
<dbReference type="GO" id="GO:0005789">
    <property type="term" value="C:endoplasmic reticulum membrane"/>
    <property type="evidence" value="ECO:0000250"/>
    <property type="project" value="UniProtKB"/>
</dbReference>
<dbReference type="GO" id="GO:0005811">
    <property type="term" value="C:lipid droplet"/>
    <property type="evidence" value="ECO:0000250"/>
    <property type="project" value="UniProtKB"/>
</dbReference>
<dbReference type="GO" id="GO:0006869">
    <property type="term" value="P:lipid transport"/>
    <property type="evidence" value="ECO:0007669"/>
    <property type="project" value="UniProtKB-KW"/>
</dbReference>
<dbReference type="GO" id="GO:0045053">
    <property type="term" value="P:protein retention in Golgi apparatus"/>
    <property type="evidence" value="ECO:0000318"/>
    <property type="project" value="GO_Central"/>
</dbReference>
<dbReference type="GO" id="GO:0006623">
    <property type="term" value="P:protein targeting to vacuole"/>
    <property type="evidence" value="ECO:0000318"/>
    <property type="project" value="GO_Central"/>
</dbReference>
<dbReference type="InterPro" id="IPR026847">
    <property type="entry name" value="VPS13"/>
</dbReference>
<dbReference type="InterPro" id="IPR056748">
    <property type="entry name" value="VPS13-like_C"/>
</dbReference>
<dbReference type="InterPro" id="IPR056747">
    <property type="entry name" value="VPS13-like_M"/>
</dbReference>
<dbReference type="InterPro" id="IPR026854">
    <property type="entry name" value="VPS13_N"/>
</dbReference>
<dbReference type="InterPro" id="IPR009543">
    <property type="entry name" value="VPS13_VAB"/>
</dbReference>
<dbReference type="PANTHER" id="PTHR16166:SF93">
    <property type="entry name" value="INTERMEMBRANE LIPID TRANSFER PROTEIN VPS13"/>
    <property type="match status" value="1"/>
</dbReference>
<dbReference type="PANTHER" id="PTHR16166">
    <property type="entry name" value="VACUOLAR PROTEIN SORTING-ASSOCIATED PROTEIN VPS13"/>
    <property type="match status" value="1"/>
</dbReference>
<dbReference type="Pfam" id="PF25037">
    <property type="entry name" value="VPS13_C"/>
    <property type="match status" value="1"/>
</dbReference>
<dbReference type="Pfam" id="PF25033">
    <property type="entry name" value="VPS13_M"/>
    <property type="match status" value="1"/>
</dbReference>
<dbReference type="Pfam" id="PF12624">
    <property type="entry name" value="VPS13_N"/>
    <property type="match status" value="1"/>
</dbReference>
<dbReference type="Pfam" id="PF25036">
    <property type="entry name" value="VPS13_VAB"/>
    <property type="match status" value="1"/>
</dbReference>
<organism>
    <name type="scientific">Dictyostelium discoideum</name>
    <name type="common">Social amoeba</name>
    <dbReference type="NCBI Taxonomy" id="44689"/>
    <lineage>
        <taxon>Eukaryota</taxon>
        <taxon>Amoebozoa</taxon>
        <taxon>Evosea</taxon>
        <taxon>Eumycetozoa</taxon>
        <taxon>Dictyostelia</taxon>
        <taxon>Dictyosteliales</taxon>
        <taxon>Dictyosteliaceae</taxon>
        <taxon>Dictyostelium</taxon>
    </lineage>
</organism>
<protein>
    <recommendedName>
        <fullName evidence="2">Intermembrane lipid transfer protein vps13A</fullName>
    </recommendedName>
    <alternativeName>
        <fullName evidence="6">Vacuolar protein sorting-associated protein 13A</fullName>
    </alternativeName>
</protein>
<reference key="1">
    <citation type="journal article" date="2005" name="Nature">
        <title>The genome of the social amoeba Dictyostelium discoideum.</title>
        <authorList>
            <person name="Eichinger L."/>
            <person name="Pachebat J.A."/>
            <person name="Gloeckner G."/>
            <person name="Rajandream M.A."/>
            <person name="Sucgang R."/>
            <person name="Berriman M."/>
            <person name="Song J."/>
            <person name="Olsen R."/>
            <person name="Szafranski K."/>
            <person name="Xu Q."/>
            <person name="Tunggal B."/>
            <person name="Kummerfeld S."/>
            <person name="Madera M."/>
            <person name="Konfortov B.A."/>
            <person name="Rivero F."/>
            <person name="Bankier A.T."/>
            <person name="Lehmann R."/>
            <person name="Hamlin N."/>
            <person name="Davies R."/>
            <person name="Gaudet P."/>
            <person name="Fey P."/>
            <person name="Pilcher K."/>
            <person name="Chen G."/>
            <person name="Saunders D."/>
            <person name="Sodergren E.J."/>
            <person name="Davis P."/>
            <person name="Kerhornou A."/>
            <person name="Nie X."/>
            <person name="Hall N."/>
            <person name="Anjard C."/>
            <person name="Hemphill L."/>
            <person name="Bason N."/>
            <person name="Farbrother P."/>
            <person name="Desany B."/>
            <person name="Just E."/>
            <person name="Morio T."/>
            <person name="Rost R."/>
            <person name="Churcher C.M."/>
            <person name="Cooper J."/>
            <person name="Haydock S."/>
            <person name="van Driessche N."/>
            <person name="Cronin A."/>
            <person name="Goodhead I."/>
            <person name="Muzny D.M."/>
            <person name="Mourier T."/>
            <person name="Pain A."/>
            <person name="Lu M."/>
            <person name="Harper D."/>
            <person name="Lindsay R."/>
            <person name="Hauser H."/>
            <person name="James K.D."/>
            <person name="Quiles M."/>
            <person name="Madan Babu M."/>
            <person name="Saito T."/>
            <person name="Buchrieser C."/>
            <person name="Wardroper A."/>
            <person name="Felder M."/>
            <person name="Thangavelu M."/>
            <person name="Johnson D."/>
            <person name="Knights A."/>
            <person name="Loulseged H."/>
            <person name="Mungall K.L."/>
            <person name="Oliver K."/>
            <person name="Price C."/>
            <person name="Quail M.A."/>
            <person name="Urushihara H."/>
            <person name="Hernandez J."/>
            <person name="Rabbinowitsch E."/>
            <person name="Steffen D."/>
            <person name="Sanders M."/>
            <person name="Ma J."/>
            <person name="Kohara Y."/>
            <person name="Sharp S."/>
            <person name="Simmonds M.N."/>
            <person name="Spiegler S."/>
            <person name="Tivey A."/>
            <person name="Sugano S."/>
            <person name="White B."/>
            <person name="Walker D."/>
            <person name="Woodward J.R."/>
            <person name="Winckler T."/>
            <person name="Tanaka Y."/>
            <person name="Shaulsky G."/>
            <person name="Schleicher M."/>
            <person name="Weinstock G.M."/>
            <person name="Rosenthal A."/>
            <person name="Cox E.C."/>
            <person name="Chisholm R.L."/>
            <person name="Gibbs R.A."/>
            <person name="Loomis W.F."/>
            <person name="Platzer M."/>
            <person name="Kay R.R."/>
            <person name="Williams J.G."/>
            <person name="Dear P.H."/>
            <person name="Noegel A.A."/>
            <person name="Barrell B.G."/>
            <person name="Kuspa A."/>
        </authorList>
    </citation>
    <scope>NUCLEOTIDE SEQUENCE [LARGE SCALE GENOMIC DNA]</scope>
    <source>
        <strain>AX4</strain>
    </source>
</reference>
<reference key="2">
    <citation type="journal article" date="2008" name="BMC Genomics">
        <title>Genome-wide transcriptional changes induced by phagocytosis or growth on bacteria in Dictyostelium.</title>
        <authorList>
            <person name="Sillo A."/>
            <person name="Bloomfield G."/>
            <person name="Balest A."/>
            <person name="Balbo A."/>
            <person name="Pergolizzi B."/>
            <person name="Peracino B."/>
            <person name="Skelton J."/>
            <person name="Ivens A."/>
            <person name="Bozzaro S."/>
        </authorList>
    </citation>
    <scope>INDUCTION [LARGE SCALE ANALYSIS]</scope>
</reference>
<proteinExistence type="evidence at transcript level"/>
<feature type="chain" id="PRO_0000365952" description="Intermembrane lipid transfer protein vps13A">
    <location>
        <begin position="1"/>
        <end position="3373"/>
    </location>
</feature>
<feature type="domain" description="Chorein N-terminal" evidence="3">
    <location>
        <begin position="3"/>
        <end position="119"/>
    </location>
</feature>
<feature type="domain" description="SHR-BD" evidence="3">
    <location>
        <begin position="2405"/>
        <end position="2706"/>
    </location>
</feature>
<feature type="region of interest" description="Disordered" evidence="4">
    <location>
        <begin position="818"/>
        <end position="858"/>
    </location>
</feature>
<feature type="region of interest" description="Disordered" evidence="4">
    <location>
        <begin position="1028"/>
        <end position="1096"/>
    </location>
</feature>
<feature type="region of interest" description="Disordered" evidence="4">
    <location>
        <begin position="1259"/>
        <end position="1304"/>
    </location>
</feature>
<feature type="region of interest" description="Disordered" evidence="4">
    <location>
        <begin position="1648"/>
        <end position="1729"/>
    </location>
</feature>
<feature type="region of interest" description="Disordered" evidence="4">
    <location>
        <begin position="1872"/>
        <end position="1913"/>
    </location>
</feature>
<feature type="region of interest" description="Disordered" evidence="4">
    <location>
        <begin position="2909"/>
        <end position="2933"/>
    </location>
</feature>
<feature type="compositionally biased region" description="Polar residues" evidence="4">
    <location>
        <begin position="823"/>
        <end position="839"/>
    </location>
</feature>
<feature type="compositionally biased region" description="Low complexity" evidence="4">
    <location>
        <begin position="840"/>
        <end position="858"/>
    </location>
</feature>
<feature type="compositionally biased region" description="Low complexity" evidence="4">
    <location>
        <begin position="1048"/>
        <end position="1066"/>
    </location>
</feature>
<feature type="compositionally biased region" description="Basic and acidic residues" evidence="4">
    <location>
        <begin position="1263"/>
        <end position="1274"/>
    </location>
</feature>
<feature type="compositionally biased region" description="Basic and acidic residues" evidence="4">
    <location>
        <begin position="1288"/>
        <end position="1304"/>
    </location>
</feature>
<feature type="compositionally biased region" description="Low complexity" evidence="4">
    <location>
        <begin position="1659"/>
        <end position="1685"/>
    </location>
</feature>
<feature type="compositionally biased region" description="Low complexity" evidence="4">
    <location>
        <begin position="1695"/>
        <end position="1716"/>
    </location>
</feature>
<feature type="compositionally biased region" description="Low complexity" evidence="4">
    <location>
        <begin position="1884"/>
        <end position="1898"/>
    </location>
</feature>
<feature type="compositionally biased region" description="Polar residues" evidence="4">
    <location>
        <begin position="1899"/>
        <end position="1909"/>
    </location>
</feature>
<feature type="compositionally biased region" description="Low complexity" evidence="4">
    <location>
        <begin position="2911"/>
        <end position="2920"/>
    </location>
</feature>
<name>VP13A_DICDI</name>
<gene>
    <name type="primary">vps13A</name>
    <name type="ORF">DDB_G0286725</name>
</gene>
<comment type="function">
    <text evidence="1">Mediates the transfer of lipids between membranes at organelle contact sites.</text>
</comment>
<comment type="subcellular location">
    <subcellularLocation>
        <location evidence="6">Membrane</location>
        <topology evidence="6">Peripheral membrane protein</topology>
    </subcellularLocation>
</comment>
<comment type="induction">
    <text evidence="5">Down-regulated by phagocytic stimuli.</text>
</comment>
<comment type="similarity">
    <text evidence="6">Belongs to the VPS13 family.</text>
</comment>
<keyword id="KW-0445">Lipid transport</keyword>
<keyword id="KW-0472">Membrane</keyword>
<keyword id="KW-1185">Reference proteome</keyword>
<keyword id="KW-0813">Transport</keyword>
<evidence type="ECO:0000250" key="1">
    <source>
        <dbReference type="UniProtKB" id="Q07878"/>
    </source>
</evidence>
<evidence type="ECO:0000250" key="2">
    <source>
        <dbReference type="UniProtKB" id="Q96RL7"/>
    </source>
</evidence>
<evidence type="ECO:0000255" key="3"/>
<evidence type="ECO:0000256" key="4">
    <source>
        <dbReference type="SAM" id="MobiDB-lite"/>
    </source>
</evidence>
<evidence type="ECO:0000269" key="5">
    <source>
    </source>
</evidence>
<evidence type="ECO:0000305" key="6"/>
<sequence length="3373" mass="379780">MVFEGLVSDVLSRVLGEYVKNLNKDQLKIGIFGGSVQLQNLELKEDALANLPINLPITVKKGFLGKLDLKVPWKDLKSKPVIINIDCIYALAVPQTQNYKYDEKEEAKKQAELKKKKLENYEWIKSIKDAEENEISSLQSEKSDSFTDRLVTKIIDNLQIVINKVHIRFENKNDIGKLYALGITLDKLSIQSTDEFWIPSFVDSSKSKFIKKLALMDSLGFYIDDNADSLQNLKLDEFTKAFTSLIPSSASFSLLSKYIIKPISSQLKLNINKSDIIEKSIPKILVECVMSQITCTLSSGQYQNILSILNFTNEYLRDIKYLKFRPIVKVSENPKLWWRYVGQVIVEQIREKRFSRSWEFIAQRRRARLAYIPLFKRNIPKVDWLQPLNKHELEQLNQLEERLSFEDIVYFRSLAYAEIKKETEKNKIRKQFLDSKRQERGFFQNIFNTKKDEDEKAAPKIQLSSEERDELYKTIEYNDVVSASEEPPDWVKIIGNFEIKGFAIQLVEANQVFIEALYTGLSLKFEQRNEGIKVMAGIHLFEVYDQFTKRTHFPKIIASVPTKGTGTFASVIVDTRPPDKNLDLSVELNMDPLNIIVTKPLIMKVVDFFHDPNLDITNISNRAGAHLEDIKEQAKMQLQDAIDNHKVLGLAVNIHAPVIFIPEDVINERSNILIVDLGKLVVRSDTSAFVKGSNKLAGSTSEIDLYDKFNVSFESIQVLLSDDLKSAISTGDKKPPTIGGVNDKQGHPLKHHNSIIKKFDIQLKIFSSIQQNNLTMTKLKIKGELPKFDFYLSDKKFKQLLTILNAITADIPVTSGKPKATITPINDSNSPSSVSPKLISTSPHSFSSSSAPVDVNSSNDLKKSKENIELLLNAKLVEAEFEIKSISLTLSNNQSDLIRVVFSDINVGFQQRTFDMSGTFKLSSLEIEDCFTKNTLNKLATSNPPHADRSLGKDSLVQMHFKQIQTASPEFNKIDMSIDLKIHSFYLVINPSTIYQLLKLAKSLQKDPENIDQISKAYPRLLSRNKVVPINSSEGGGTAATSPNAHLSSPNQQSPNQQSPNQQSPQIVSRKIITGTGSNSKPVGPDEKVVSSKTASGTTTRRVIIRSVRHVPKKKGPTEFVSMKFSVHINSLGLALNQDNNELLGIFTINNVSTDVSMFKDNRMLVQGRLGSIILDDLTPTISNYKQIIIPKNTSGDMLDFKYETFSMTLSNYAGYDASVNANVKSILFNANVGFLIHLQNYFLGGMLDPILKQDDSNNNNKSIEKSKSIDSKLNEQQSSSSSTSTPRSDDNHEKSERELDLEKNKKLLTSLQQNTNKHIPKMKLDIVVETPVLVIPQATRSKNSLIMELGKIIISNGWQYHDKTMAPMENMKIHLQDANITILSDNRSSYFLEKLTIDLGISKFLVPNTDPEVEDQTIDLSISHFAFYLDENQYRFFLGLSQNVQKELDLANKEVQEIKKLSNMGDPFEMGRITSNDMQYFTEQEVIQKMGKVLLRIHLVLDYVSFKISSLDAQGEIAHFIVRGIDVDVKNTDKNKTNIQLSMKSILLSDTRSNSTNIFKNLLENKVNTESVAPFLQVGYIRDNLLGDQYINVNINNTCLFLSPTPLLMISEFFMVPLSEQHDTNNMDVDLDLDLESLESELNSLMDPSIEKDDNDLQQQQQQSSSSSFIPSQQQQQQKVRSQSIIGQNRSRTSSIGGKESKTISSSISNNSLSSYPQEAGMEDEEEKEIFRSPTITFTATLVPSVTLVEDETLSTTRCLMLKTRVGVQFRRDPHGIENATVVIENTKVNIYKPSSTESENQGSRPIQILKPIEMITIKYIKENLTSTEWKQDIGISCTAMKVFFSYDDVKAILKILNNITTNLQKQQEQQKKRQLSFDNMASSSTSLPSLNKSTNSFQTSTSGNSNSGKKDEELFTNNEKLRFSCPNVSVLFINESPEMYIPIIELFFADIEASAMNWSTDLESKASMSIKGDYFNETNMKFEPVIEDWSFSVDLKKNRTGKIKGSFLATRELLNINVSHSLLQTISSAMIHVEKIDQMDAANLSSSLNASNLTTSTGSNNSSTSGSGLVQSFNGPSVLNKYLPGGEKNDSKISFHSHWISNQTGVTLEYHIPKVDSEMFQLTESSEPVSLPMKISKSRDATMGEHLNIELFIQGSKISNLSMDAVGYRIYRIGSTNEFITCEVRLRPDGSKCCYIKSMDQFENNTSLNLELKCQENGSPFSIAKHSKFSLPILVSKDLCKFWIKLENSPYWSDPIDIYKLPDHENSKLFKLQTVDKVGMFVSLVHKTIANRNCDRFNNTFKFFPPIQIENILPYPFKLSIPGTTIDKVNMGSGEKIDCHYYQPGSNLVAIVSELENFPETKHTLVSGDATSPTFTKTFKLQQNNREISLDIERTELIKGVRTLSFYCQYWLVNNSLLPIEVKLSDNQVLLVPPNLPDQLPRPPVLYSNNTIRARIPLQAEQPMNKSFCEKFPISAVGNPNTIFLTNPTRTYELSYKVDFCPNERFRLSKTVTFVPKNVICNDLPFPILVAQCVSTIDGIDKMALNFSGSGLSSSSGSNGKGVSNPVRLLGELRLDPGEYKPFHWEENVENKKISIRPITNEKNPQEWRWSGGFFVDSISDYVVKSRNTERPDHDSLLFHVNIKEKQGTHFIRIPLSSKESPPYIIQNDTQFKISFFQRDSPENIDYIEPKEKLCYGWDEPSAEYVLSVAVEGKTLKKRINVNKIKGYKLQHERTDLYITITIDGPSRVLLFSTNEKKFRSIKAWTDNKAVNLSQSQSEYHFNIRCSGIGCSIIDKTPKELAYISMKDFLIIATQSSIENTVEVKLAELQIDNQLIKTDFPVLIHTVSPDKEHRKDFLHAVIIKSTIDNIDYFRYFSTLIQEMTIELEDHWIKEVLDFVDSIPSFGRGNNASNNNNNNGMTSSQMRQSGSGLDSLTSTLYNAVSIEPPTSDSSTIKMVYFALLVLNPIKINLTLALQNDGLIKSNHKILSLVEGLGLSLTRLDRAPITLQGLLMEHPFTSRSTIIDKIKTSYIQQALRQFYNILGSVDFLGNPVGLFRNFGTGVHDFFVEPAQGLVKSPADFTKGLAKGTSSFVKNSVFGTFNTLSKLTGTLGTGVATLSFDEKYLQERKLHQARKPSHVGEGLAMGGIGLGRGILQGITGIVTKPVEGAKKGGFAGFAKGLAQGVVGVAVKPTTAVIDLATKTTEGIKNTTNLQSQAERVRPPRCFSHDNVLRPFDEVESEGWFLLKTAHKGKHASDSYIWHHIINQECTIIISDHRIILSKSKKNFLHSSFLFQIPFKFIKSNEMVDDGVLLEFDPPQNLGLLDRDVKSKVIPVDDPNVNMLLNMKLSHALKKFHDNNPNLSNSSSIKY</sequence>
<accession>Q54LB8</accession>